<comment type="function">
    <text>Snake venom phospholipase A2 (PLA2) that inhibits neuromuscular transmission by blocking acetylcholine release from the nerve termini. PLA2 catalyzes the calcium-dependent hydrolysis of the 2-acyl groups in 3-sn-phosphoglycerides.</text>
</comment>
<comment type="catalytic activity">
    <reaction evidence="2 3">
        <text>a 1,2-diacyl-sn-glycero-3-phosphocholine + H2O = a 1-acyl-sn-glycero-3-phosphocholine + a fatty acid + H(+)</text>
        <dbReference type="Rhea" id="RHEA:15801"/>
        <dbReference type="ChEBI" id="CHEBI:15377"/>
        <dbReference type="ChEBI" id="CHEBI:15378"/>
        <dbReference type="ChEBI" id="CHEBI:28868"/>
        <dbReference type="ChEBI" id="CHEBI:57643"/>
        <dbReference type="ChEBI" id="CHEBI:58168"/>
        <dbReference type="EC" id="3.1.1.4"/>
    </reaction>
</comment>
<comment type="cofactor">
    <cofactor evidence="1">
        <name>Ca(2+)</name>
        <dbReference type="ChEBI" id="CHEBI:29108"/>
    </cofactor>
    <text evidence="1">Binds 1 Ca(2+) ion.</text>
</comment>
<comment type="subcellular location">
    <subcellularLocation>
        <location>Secreted</location>
    </subcellularLocation>
</comment>
<comment type="tissue specificity">
    <text>Expressed by the venom gland.</text>
</comment>
<comment type="similarity">
    <text evidence="4">Belongs to the phospholipase A2 family. Group I subfamily.</text>
</comment>
<protein>
    <recommendedName>
        <fullName>Phospholipase A2 1</fullName>
        <shortName>svPLA2</shortName>
        <ecNumber>3.1.1.4</ecNumber>
    </recommendedName>
    <alternativeName>
        <fullName>Phosphatidylcholine 2-acylhydrolase</fullName>
    </alternativeName>
    <alternativeName>
        <fullName>Phospholipase A2 isozyme I</fullName>
    </alternativeName>
</protein>
<organism>
    <name type="scientific">Calliophis bivirgatus</name>
    <name type="common">Blue Malaysian coral snake</name>
    <name type="synonym">Maticora bivirgata</name>
    <dbReference type="NCBI Taxonomy" id="8633"/>
    <lineage>
        <taxon>Eukaryota</taxon>
        <taxon>Metazoa</taxon>
        <taxon>Chordata</taxon>
        <taxon>Craniata</taxon>
        <taxon>Vertebrata</taxon>
        <taxon>Euteleostomi</taxon>
        <taxon>Lepidosauria</taxon>
        <taxon>Squamata</taxon>
        <taxon>Bifurcata</taxon>
        <taxon>Unidentata</taxon>
        <taxon>Episquamata</taxon>
        <taxon>Toxicofera</taxon>
        <taxon>Serpentes</taxon>
        <taxon>Colubroidea</taxon>
        <taxon>Elapidae</taxon>
        <taxon>Elapinae</taxon>
        <taxon>Calliophis</taxon>
    </lineage>
</organism>
<name>PA21_CALBG</name>
<dbReference type="EC" id="3.1.1.4"/>
<dbReference type="PIR" id="A39558">
    <property type="entry name" value="A39558"/>
</dbReference>
<dbReference type="SMR" id="P24644"/>
<dbReference type="GO" id="GO:0005576">
    <property type="term" value="C:extracellular region"/>
    <property type="evidence" value="ECO:0007669"/>
    <property type="project" value="UniProtKB-SubCell"/>
</dbReference>
<dbReference type="GO" id="GO:0005509">
    <property type="term" value="F:calcium ion binding"/>
    <property type="evidence" value="ECO:0007669"/>
    <property type="project" value="InterPro"/>
</dbReference>
<dbReference type="GO" id="GO:0004623">
    <property type="term" value="F:phospholipase A2 activity"/>
    <property type="evidence" value="ECO:0007669"/>
    <property type="project" value="UniProtKB-EC"/>
</dbReference>
<dbReference type="GO" id="GO:0090729">
    <property type="term" value="F:toxin activity"/>
    <property type="evidence" value="ECO:0007669"/>
    <property type="project" value="UniProtKB-KW"/>
</dbReference>
<dbReference type="GO" id="GO:0050482">
    <property type="term" value="P:arachidonate secretion"/>
    <property type="evidence" value="ECO:0007669"/>
    <property type="project" value="InterPro"/>
</dbReference>
<dbReference type="GO" id="GO:0016042">
    <property type="term" value="P:lipid catabolic process"/>
    <property type="evidence" value="ECO:0007669"/>
    <property type="project" value="UniProtKB-KW"/>
</dbReference>
<dbReference type="GO" id="GO:0006644">
    <property type="term" value="P:phospholipid metabolic process"/>
    <property type="evidence" value="ECO:0007669"/>
    <property type="project" value="InterPro"/>
</dbReference>
<dbReference type="Gene3D" id="1.20.90.10">
    <property type="entry name" value="Phospholipase A2 domain"/>
    <property type="match status" value="1"/>
</dbReference>
<dbReference type="InterPro" id="IPR001211">
    <property type="entry name" value="PLipase_A2"/>
</dbReference>
<dbReference type="InterPro" id="IPR016090">
    <property type="entry name" value="PLipase_A2_dom"/>
</dbReference>
<dbReference type="InterPro" id="IPR036444">
    <property type="entry name" value="PLipase_A2_dom_sf"/>
</dbReference>
<dbReference type="Pfam" id="PF00068">
    <property type="entry name" value="Phospholip_A2_1"/>
    <property type="match status" value="1"/>
</dbReference>
<dbReference type="PRINTS" id="PR00389">
    <property type="entry name" value="PHPHLIPASEA2"/>
</dbReference>
<dbReference type="SUPFAM" id="SSF48619">
    <property type="entry name" value="Phospholipase A2, PLA2"/>
    <property type="match status" value="1"/>
</dbReference>
<reference key="1">
    <citation type="journal article" date="1991" name="Toxicon">
        <title>Studies on the venom components of the long-glanded coral snake, Maticora bivirgata.</title>
        <authorList>
            <person name="Takasaki C."/>
            <person name="Yoshida H."/>
            <person name="Shimazu T."/>
            <person name="Teruuchi T."/>
            <person name="Toriba M."/>
            <person name="Tamiya N."/>
        </authorList>
    </citation>
    <scope>PROTEIN SEQUENCE</scope>
    <source>
        <tissue>Venom</tissue>
    </source>
</reference>
<evidence type="ECO:0000250" key="1"/>
<evidence type="ECO:0000255" key="2">
    <source>
        <dbReference type="PROSITE-ProRule" id="PRU10035"/>
    </source>
</evidence>
<evidence type="ECO:0000255" key="3">
    <source>
        <dbReference type="PROSITE-ProRule" id="PRU10036"/>
    </source>
</evidence>
<evidence type="ECO:0000305" key="4"/>
<sequence length="38" mass="4179">NLYQFGNMIQCTIPKRLSWSSFVDYGCYCGKGGSGTPV</sequence>
<keyword id="KW-0106">Calcium</keyword>
<keyword id="KW-0903">Direct protein sequencing</keyword>
<keyword id="KW-0378">Hydrolase</keyword>
<keyword id="KW-0442">Lipid degradation</keyword>
<keyword id="KW-0443">Lipid metabolism</keyword>
<keyword id="KW-0479">Metal-binding</keyword>
<keyword id="KW-0528">Neurotoxin</keyword>
<keyword id="KW-0638">Presynaptic neurotoxin</keyword>
<keyword id="KW-0964">Secreted</keyword>
<keyword id="KW-0800">Toxin</keyword>
<proteinExistence type="evidence at protein level"/>
<feature type="chain" id="PRO_0000161655" description="Phospholipase A2 1">
    <location>
        <begin position="1"/>
        <end position="38" status="greater than"/>
    </location>
</feature>
<feature type="binding site" evidence="1">
    <location>
        <position position="28"/>
    </location>
    <ligand>
        <name>Ca(2+)</name>
        <dbReference type="ChEBI" id="CHEBI:29108"/>
    </ligand>
</feature>
<feature type="binding site" evidence="1">
    <location>
        <position position="30"/>
    </location>
    <ligand>
        <name>Ca(2+)</name>
        <dbReference type="ChEBI" id="CHEBI:29108"/>
    </ligand>
</feature>
<feature type="binding site" evidence="1">
    <location>
        <position position="32"/>
    </location>
    <ligand>
        <name>Ca(2+)</name>
        <dbReference type="ChEBI" id="CHEBI:29108"/>
    </ligand>
</feature>
<feature type="non-terminal residue">
    <location>
        <position position="38"/>
    </location>
</feature>
<accession>P24644</accession>